<protein>
    <recommendedName>
        <fullName>Protein NATD1</fullName>
    </recommendedName>
    <alternativeName>
        <fullName>N-acetyltransferase domain-containing protein 1</fullName>
    </alternativeName>
</protein>
<reference key="1">
    <citation type="journal article" date="2004" name="Nat. Genet.">
        <title>Complete sequencing and characterization of 21,243 full-length human cDNAs.</title>
        <authorList>
            <person name="Ota T."/>
            <person name="Suzuki Y."/>
            <person name="Nishikawa T."/>
            <person name="Otsuki T."/>
            <person name="Sugiyama T."/>
            <person name="Irie R."/>
            <person name="Wakamatsu A."/>
            <person name="Hayashi K."/>
            <person name="Sato H."/>
            <person name="Nagai K."/>
            <person name="Kimura K."/>
            <person name="Makita H."/>
            <person name="Sekine M."/>
            <person name="Obayashi M."/>
            <person name="Nishi T."/>
            <person name="Shibahara T."/>
            <person name="Tanaka T."/>
            <person name="Ishii S."/>
            <person name="Yamamoto J."/>
            <person name="Saito K."/>
            <person name="Kawai Y."/>
            <person name="Isono Y."/>
            <person name="Nakamura Y."/>
            <person name="Nagahari K."/>
            <person name="Murakami K."/>
            <person name="Yasuda T."/>
            <person name="Iwayanagi T."/>
            <person name="Wagatsuma M."/>
            <person name="Shiratori A."/>
            <person name="Sudo H."/>
            <person name="Hosoiri T."/>
            <person name="Kaku Y."/>
            <person name="Kodaira H."/>
            <person name="Kondo H."/>
            <person name="Sugawara M."/>
            <person name="Takahashi M."/>
            <person name="Kanda K."/>
            <person name="Yokoi T."/>
            <person name="Furuya T."/>
            <person name="Kikkawa E."/>
            <person name="Omura Y."/>
            <person name="Abe K."/>
            <person name="Kamihara K."/>
            <person name="Katsuta N."/>
            <person name="Sato K."/>
            <person name="Tanikawa M."/>
            <person name="Yamazaki M."/>
            <person name="Ninomiya K."/>
            <person name="Ishibashi T."/>
            <person name="Yamashita H."/>
            <person name="Murakawa K."/>
            <person name="Fujimori K."/>
            <person name="Tanai H."/>
            <person name="Kimata M."/>
            <person name="Watanabe M."/>
            <person name="Hiraoka S."/>
            <person name="Chiba Y."/>
            <person name="Ishida S."/>
            <person name="Ono Y."/>
            <person name="Takiguchi S."/>
            <person name="Watanabe S."/>
            <person name="Yosida M."/>
            <person name="Hotuta T."/>
            <person name="Kusano J."/>
            <person name="Kanehori K."/>
            <person name="Takahashi-Fujii A."/>
            <person name="Hara H."/>
            <person name="Tanase T.-O."/>
            <person name="Nomura Y."/>
            <person name="Togiya S."/>
            <person name="Komai F."/>
            <person name="Hara R."/>
            <person name="Takeuchi K."/>
            <person name="Arita M."/>
            <person name="Imose N."/>
            <person name="Musashino K."/>
            <person name="Yuuki H."/>
            <person name="Oshima A."/>
            <person name="Sasaki N."/>
            <person name="Aotsuka S."/>
            <person name="Yoshikawa Y."/>
            <person name="Matsunawa H."/>
            <person name="Ichihara T."/>
            <person name="Shiohata N."/>
            <person name="Sano S."/>
            <person name="Moriya S."/>
            <person name="Momiyama H."/>
            <person name="Satoh N."/>
            <person name="Takami S."/>
            <person name="Terashima Y."/>
            <person name="Suzuki O."/>
            <person name="Nakagawa S."/>
            <person name="Senoh A."/>
            <person name="Mizoguchi H."/>
            <person name="Goto Y."/>
            <person name="Shimizu F."/>
            <person name="Wakebe H."/>
            <person name="Hishigaki H."/>
            <person name="Watanabe T."/>
            <person name="Sugiyama A."/>
            <person name="Takemoto M."/>
            <person name="Kawakami B."/>
            <person name="Yamazaki M."/>
            <person name="Watanabe K."/>
            <person name="Kumagai A."/>
            <person name="Itakura S."/>
            <person name="Fukuzumi Y."/>
            <person name="Fujimori Y."/>
            <person name="Komiyama M."/>
            <person name="Tashiro H."/>
            <person name="Tanigami A."/>
            <person name="Fujiwara T."/>
            <person name="Ono T."/>
            <person name="Yamada K."/>
            <person name="Fujii Y."/>
            <person name="Ozaki K."/>
            <person name="Hirao M."/>
            <person name="Ohmori Y."/>
            <person name="Kawabata A."/>
            <person name="Hikiji T."/>
            <person name="Kobatake N."/>
            <person name="Inagaki H."/>
            <person name="Ikema Y."/>
            <person name="Okamoto S."/>
            <person name="Okitani R."/>
            <person name="Kawakami T."/>
            <person name="Noguchi S."/>
            <person name="Itoh T."/>
            <person name="Shigeta K."/>
            <person name="Senba T."/>
            <person name="Matsumura K."/>
            <person name="Nakajima Y."/>
            <person name="Mizuno T."/>
            <person name="Morinaga M."/>
            <person name="Sasaki M."/>
            <person name="Togashi T."/>
            <person name="Oyama M."/>
            <person name="Hata H."/>
            <person name="Watanabe M."/>
            <person name="Komatsu T."/>
            <person name="Mizushima-Sugano J."/>
            <person name="Satoh T."/>
            <person name="Shirai Y."/>
            <person name="Takahashi Y."/>
            <person name="Nakagawa K."/>
            <person name="Okumura K."/>
            <person name="Nagase T."/>
            <person name="Nomura N."/>
            <person name="Kikuchi H."/>
            <person name="Masuho Y."/>
            <person name="Yamashita R."/>
            <person name="Nakai K."/>
            <person name="Yada T."/>
            <person name="Nakamura Y."/>
            <person name="Ohara O."/>
            <person name="Isogai T."/>
            <person name="Sugano S."/>
        </authorList>
    </citation>
    <scope>NUCLEOTIDE SEQUENCE [LARGE SCALE MRNA]</scope>
</reference>
<reference key="2">
    <citation type="journal article" date="2006" name="Nature">
        <title>DNA sequence of human chromosome 17 and analysis of rearrangement in the human lineage.</title>
        <authorList>
            <person name="Zody M.C."/>
            <person name="Garber M."/>
            <person name="Adams D.J."/>
            <person name="Sharpe T."/>
            <person name="Harrow J."/>
            <person name="Lupski J.R."/>
            <person name="Nicholson C."/>
            <person name="Searle S.M."/>
            <person name="Wilming L."/>
            <person name="Young S.K."/>
            <person name="Abouelleil A."/>
            <person name="Allen N.R."/>
            <person name="Bi W."/>
            <person name="Bloom T."/>
            <person name="Borowsky M.L."/>
            <person name="Bugalter B.E."/>
            <person name="Butler J."/>
            <person name="Chang J.L."/>
            <person name="Chen C.-K."/>
            <person name="Cook A."/>
            <person name="Corum B."/>
            <person name="Cuomo C.A."/>
            <person name="de Jong P.J."/>
            <person name="DeCaprio D."/>
            <person name="Dewar K."/>
            <person name="FitzGerald M."/>
            <person name="Gilbert J."/>
            <person name="Gibson R."/>
            <person name="Gnerre S."/>
            <person name="Goldstein S."/>
            <person name="Grafham D.V."/>
            <person name="Grocock R."/>
            <person name="Hafez N."/>
            <person name="Hagopian D.S."/>
            <person name="Hart E."/>
            <person name="Norman C.H."/>
            <person name="Humphray S."/>
            <person name="Jaffe D.B."/>
            <person name="Jones M."/>
            <person name="Kamal M."/>
            <person name="Khodiyar V.K."/>
            <person name="LaButti K."/>
            <person name="Laird G."/>
            <person name="Lehoczky J."/>
            <person name="Liu X."/>
            <person name="Lokyitsang T."/>
            <person name="Loveland J."/>
            <person name="Lui A."/>
            <person name="Macdonald P."/>
            <person name="Major J.E."/>
            <person name="Matthews L."/>
            <person name="Mauceli E."/>
            <person name="McCarroll S.A."/>
            <person name="Mihalev A.H."/>
            <person name="Mudge J."/>
            <person name="Nguyen C."/>
            <person name="Nicol R."/>
            <person name="O'Leary S.B."/>
            <person name="Osoegawa K."/>
            <person name="Schwartz D.C."/>
            <person name="Shaw-Smith C."/>
            <person name="Stankiewicz P."/>
            <person name="Steward C."/>
            <person name="Swarbreck D."/>
            <person name="Venkataraman V."/>
            <person name="Whittaker C.A."/>
            <person name="Yang X."/>
            <person name="Zimmer A.R."/>
            <person name="Bradley A."/>
            <person name="Hubbard T."/>
            <person name="Birren B.W."/>
            <person name="Rogers J."/>
            <person name="Lander E.S."/>
            <person name="Nusbaum C."/>
        </authorList>
    </citation>
    <scope>NUCLEOTIDE SEQUENCE [LARGE SCALE GENOMIC DNA]</scope>
</reference>
<reference key="3">
    <citation type="journal article" date="2004" name="Genome Res.">
        <title>The status, quality, and expansion of the NIH full-length cDNA project: the Mammalian Gene Collection (MGC).</title>
        <authorList>
            <consortium name="The MGC Project Team"/>
        </authorList>
    </citation>
    <scope>NUCLEOTIDE SEQUENCE [LARGE SCALE MRNA]</scope>
    <source>
        <tissue>Brain</tissue>
    </source>
</reference>
<feature type="chain" id="PRO_0000320656" description="Protein NATD1">
    <location>
        <begin position="1"/>
        <end position="113"/>
    </location>
</feature>
<feature type="domain" description="N-acetyltransferase" evidence="1">
    <location>
        <begin position="22"/>
        <end position="112"/>
    </location>
</feature>
<feature type="sequence variant" id="VAR_062227" description="In dbSNP:rs12449311.">
    <original>V</original>
    <variation>I</variation>
    <location>
        <position position="42"/>
    </location>
</feature>
<feature type="sequence conflict" description="In Ref. 3; AAH29527." evidence="2" ref="3">
    <original>R</original>
    <variation>S</variation>
    <location>
        <position position="65"/>
    </location>
</feature>
<name>NATD1_HUMAN</name>
<keyword id="KW-1267">Proteomics identification</keyword>
<keyword id="KW-1185">Reference proteome</keyword>
<comment type="interaction">
    <interactant intactId="EBI-8656665">
        <id>Q8N6N6</id>
    </interactant>
    <interactant intactId="EBI-10173507">
        <id>Q6UY14-3</id>
        <label>ADAMTSL4</label>
    </interactant>
    <organismsDiffer>false</organismsDiffer>
    <experiments>6</experiments>
</comment>
<comment type="interaction">
    <interactant intactId="EBI-8656665">
        <id>Q8N6N6</id>
    </interactant>
    <interactant intactId="EBI-747204">
        <id>Q9UKT9</id>
        <label>IKZF3</label>
    </interactant>
    <organismsDiffer>false</organismsDiffer>
    <experiments>3</experiments>
</comment>
<comment type="interaction">
    <interactant intactId="EBI-8656665">
        <id>Q8N6N6</id>
    </interactant>
    <interactant intactId="EBI-6509505">
        <id>Q0VD86</id>
        <label>INCA1</label>
    </interactant>
    <organismsDiffer>false</organismsDiffer>
    <experiments>3</experiments>
</comment>
<comment type="interaction">
    <interactant intactId="EBI-8656665">
        <id>Q8N6N6</id>
    </interactant>
    <interactant intactId="EBI-740897">
        <id>Q9GZT8</id>
        <label>NIF3L1</label>
    </interactant>
    <organismsDiffer>false</organismsDiffer>
    <experiments>6</experiments>
</comment>
<comment type="interaction">
    <interactant intactId="EBI-8656665">
        <id>Q8N6N6</id>
    </interactant>
    <interactant intactId="EBI-79165">
        <id>Q9NRD5</id>
        <label>PICK1</label>
    </interactant>
    <organismsDiffer>false</organismsDiffer>
    <experiments>3</experiments>
</comment>
<comment type="interaction">
    <interactant intactId="EBI-8656665">
        <id>Q8N6N6</id>
    </interactant>
    <interactant intactId="EBI-949255">
        <id>Q58EX7</id>
        <label>PLEKHG4</label>
    </interactant>
    <organismsDiffer>false</organismsDiffer>
    <experiments>3</experiments>
</comment>
<comment type="interaction">
    <interactant intactId="EBI-8656665">
        <id>Q8N6N6</id>
    </interactant>
    <interactant intactId="EBI-355744">
        <id>Q12933</id>
        <label>TRAF2</label>
    </interactant>
    <organismsDiffer>false</organismsDiffer>
    <experiments>3</experiments>
</comment>
<comment type="interaction">
    <interactant intactId="EBI-8656665">
        <id>Q8N6N6</id>
    </interactant>
    <interactant intactId="EBI-743265">
        <id>Q9BUY5</id>
        <label>ZNF426</label>
    </interactant>
    <organismsDiffer>false</organismsDiffer>
    <experiments>3</experiments>
</comment>
<comment type="similarity">
    <text evidence="2">Belongs to the NATD1 family.</text>
</comment>
<organism>
    <name type="scientific">Homo sapiens</name>
    <name type="common">Human</name>
    <dbReference type="NCBI Taxonomy" id="9606"/>
    <lineage>
        <taxon>Eukaryota</taxon>
        <taxon>Metazoa</taxon>
        <taxon>Chordata</taxon>
        <taxon>Craniata</taxon>
        <taxon>Vertebrata</taxon>
        <taxon>Euteleostomi</taxon>
        <taxon>Mammalia</taxon>
        <taxon>Eutheria</taxon>
        <taxon>Euarchontoglires</taxon>
        <taxon>Primates</taxon>
        <taxon>Haplorrhini</taxon>
        <taxon>Catarrhini</taxon>
        <taxon>Hominidae</taxon>
        <taxon>Homo</taxon>
    </lineage>
</organism>
<gene>
    <name type="primary">NATD1</name>
    <name type="synonym">C17orf103</name>
    <name type="synonym">GTLF3B</name>
</gene>
<sequence length="113" mass="13032">MAHSAAAVPLGALEQGCPIRVEHDRRRRQFTVRLNGCHDRAVLLYEYVGKRIVDLQHTEVPDAYRGRGIAKHLAKAALDFVVEEDLKAHLTCWYIQKYVKENPLPQYLERLQP</sequence>
<dbReference type="EMBL" id="AK126856">
    <property type="protein sequence ID" value="BAG54382.1"/>
    <property type="molecule type" value="mRNA"/>
</dbReference>
<dbReference type="EMBL" id="AC087294">
    <property type="status" value="NOT_ANNOTATED_CDS"/>
    <property type="molecule type" value="Genomic_DNA"/>
</dbReference>
<dbReference type="EMBL" id="BC029527">
    <property type="protein sequence ID" value="AAH29527.1"/>
    <property type="molecule type" value="mRNA"/>
</dbReference>
<dbReference type="RefSeq" id="NP_690878.2">
    <property type="nucleotide sequence ID" value="NM_152914.3"/>
</dbReference>
<dbReference type="SMR" id="Q8N6N6"/>
<dbReference type="BioGRID" id="129155">
    <property type="interactions" value="14"/>
</dbReference>
<dbReference type="FunCoup" id="Q8N6N6">
    <property type="interactions" value="7"/>
</dbReference>
<dbReference type="IntAct" id="Q8N6N6">
    <property type="interactions" value="12"/>
</dbReference>
<dbReference type="MINT" id="Q8N6N6"/>
<dbReference type="STRING" id="9606.ENSP00000478388"/>
<dbReference type="iPTMnet" id="Q8N6N6"/>
<dbReference type="PhosphoSitePlus" id="Q8N6N6"/>
<dbReference type="BioMuta" id="NATD1"/>
<dbReference type="DMDM" id="206729869"/>
<dbReference type="jPOST" id="Q8N6N6"/>
<dbReference type="MassIVE" id="Q8N6N6"/>
<dbReference type="PaxDb" id="9606-ENSP00000478388"/>
<dbReference type="PeptideAtlas" id="Q8N6N6"/>
<dbReference type="ProteomicsDB" id="72207"/>
<dbReference type="Pumba" id="Q8N6N6"/>
<dbReference type="Antibodypedia" id="75937">
    <property type="antibodies" value="5 antibodies from 4 providers"/>
</dbReference>
<dbReference type="DNASU" id="256302"/>
<dbReference type="Ensembl" id="ENST00000611551.1">
    <property type="protein sequence ID" value="ENSP00000478388.1"/>
    <property type="gene ID" value="ENSG00000274180.1"/>
</dbReference>
<dbReference type="GeneID" id="256302"/>
<dbReference type="KEGG" id="hsa:256302"/>
<dbReference type="MANE-Select" id="ENST00000611551.1">
    <property type="protein sequence ID" value="ENSP00000478388.1"/>
    <property type="RefSeq nucleotide sequence ID" value="NM_152914.3"/>
    <property type="RefSeq protein sequence ID" value="NP_690878.2"/>
</dbReference>
<dbReference type="UCSC" id="uc032exx.2">
    <property type="organism name" value="human"/>
</dbReference>
<dbReference type="AGR" id="HGNC:30770"/>
<dbReference type="CTD" id="256302"/>
<dbReference type="DisGeNET" id="256302"/>
<dbReference type="GeneCards" id="NATD1"/>
<dbReference type="HGNC" id="HGNC:30770">
    <property type="gene designation" value="NATD1"/>
</dbReference>
<dbReference type="HPA" id="ENSG00000274180">
    <property type="expression patterns" value="Tissue enhanced (skeletal)"/>
</dbReference>
<dbReference type="neXtProt" id="NX_Q8N6N6"/>
<dbReference type="OpenTargets" id="ENSG00000274180"/>
<dbReference type="PharmGKB" id="PA164716941"/>
<dbReference type="VEuPathDB" id="HostDB:ENSG00000274180"/>
<dbReference type="eggNOG" id="ENOG502S2NM">
    <property type="taxonomic scope" value="Eukaryota"/>
</dbReference>
<dbReference type="GeneTree" id="ENSGT00390000014840"/>
<dbReference type="HOGENOM" id="CLU_132888_1_1_1"/>
<dbReference type="InParanoid" id="Q8N6N6"/>
<dbReference type="OMA" id="EIMTITH"/>
<dbReference type="OrthoDB" id="74247at2759"/>
<dbReference type="PAN-GO" id="Q8N6N6">
    <property type="GO annotations" value="0 GO annotations based on evolutionary models"/>
</dbReference>
<dbReference type="PhylomeDB" id="Q8N6N6"/>
<dbReference type="PathwayCommons" id="Q8N6N6"/>
<dbReference type="SignaLink" id="Q8N6N6"/>
<dbReference type="BioGRID-ORCS" id="256302">
    <property type="hits" value="3 hits in 238 CRISPR screens"/>
</dbReference>
<dbReference type="ChiTaRS" id="NATD1">
    <property type="organism name" value="human"/>
</dbReference>
<dbReference type="GenomeRNAi" id="256302"/>
<dbReference type="Pharos" id="Q8N6N6">
    <property type="development level" value="Tdark"/>
</dbReference>
<dbReference type="PRO" id="PR:Q8N6N6"/>
<dbReference type="Proteomes" id="UP000005640">
    <property type="component" value="Chromosome 17"/>
</dbReference>
<dbReference type="RNAct" id="Q8N6N6">
    <property type="molecule type" value="protein"/>
</dbReference>
<dbReference type="Bgee" id="ENSG00000274180">
    <property type="expression patterns" value="Expressed in tibialis anterior and 155 other cell types or tissues"/>
</dbReference>
<dbReference type="FunFam" id="3.40.630.30:FF:000030">
    <property type="entry name" value="NATD1 isoform 1"/>
    <property type="match status" value="1"/>
</dbReference>
<dbReference type="Gene3D" id="3.40.630.30">
    <property type="match status" value="1"/>
</dbReference>
<dbReference type="InterPro" id="IPR016181">
    <property type="entry name" value="Acyl_CoA_acyltransferase"/>
</dbReference>
<dbReference type="InterPro" id="IPR045057">
    <property type="entry name" value="Gcn5-rel_NAT"/>
</dbReference>
<dbReference type="InterPro" id="IPR031165">
    <property type="entry name" value="GNAT_YJDJ"/>
</dbReference>
<dbReference type="PANTHER" id="PTHR31435">
    <property type="entry name" value="PROTEIN NATD1"/>
    <property type="match status" value="1"/>
</dbReference>
<dbReference type="PANTHER" id="PTHR31435:SF9">
    <property type="entry name" value="PROTEIN NATD1"/>
    <property type="match status" value="1"/>
</dbReference>
<dbReference type="Pfam" id="PF14542">
    <property type="entry name" value="Acetyltransf_CG"/>
    <property type="match status" value="1"/>
</dbReference>
<dbReference type="SUPFAM" id="SSF55729">
    <property type="entry name" value="Acyl-CoA N-acyltransferases (Nat)"/>
    <property type="match status" value="1"/>
</dbReference>
<dbReference type="PROSITE" id="PS51729">
    <property type="entry name" value="GNAT_YJDJ"/>
    <property type="match status" value="1"/>
</dbReference>
<proteinExistence type="evidence at protein level"/>
<accession>Q8N6N6</accession>
<accession>A8MWQ7</accession>
<accession>B3KX70</accession>
<evidence type="ECO:0000255" key="1">
    <source>
        <dbReference type="PROSITE-ProRule" id="PRU00532"/>
    </source>
</evidence>
<evidence type="ECO:0000305" key="2"/>